<name>FB141_ARATH</name>
<evidence type="ECO:0000255" key="1">
    <source>
        <dbReference type="PROSITE-ProRule" id="PRU00080"/>
    </source>
</evidence>
<accession>Q9LHN6</accession>
<organism>
    <name type="scientific">Arabidopsis thaliana</name>
    <name type="common">Mouse-ear cress</name>
    <dbReference type="NCBI Taxonomy" id="3702"/>
    <lineage>
        <taxon>Eukaryota</taxon>
        <taxon>Viridiplantae</taxon>
        <taxon>Streptophyta</taxon>
        <taxon>Embryophyta</taxon>
        <taxon>Tracheophyta</taxon>
        <taxon>Spermatophyta</taxon>
        <taxon>Magnoliopsida</taxon>
        <taxon>eudicotyledons</taxon>
        <taxon>Gunneridae</taxon>
        <taxon>Pentapetalae</taxon>
        <taxon>rosids</taxon>
        <taxon>malvids</taxon>
        <taxon>Brassicales</taxon>
        <taxon>Brassicaceae</taxon>
        <taxon>Camelineae</taxon>
        <taxon>Arabidopsis</taxon>
    </lineage>
</organism>
<proteinExistence type="predicted"/>
<dbReference type="EMBL" id="AP002038">
    <property type="protein sequence ID" value="BAB02605.1"/>
    <property type="molecule type" value="Genomic_DNA"/>
</dbReference>
<dbReference type="EMBL" id="AP001307">
    <property type="protein sequence ID" value="BAB02605.1"/>
    <property type="status" value="JOINED"/>
    <property type="molecule type" value="Genomic_DNA"/>
</dbReference>
<dbReference type="EMBL" id="CP002686">
    <property type="status" value="NOT_ANNOTATED_CDS"/>
    <property type="molecule type" value="Genomic_DNA"/>
</dbReference>
<dbReference type="FunCoup" id="Q9LHN6">
    <property type="interactions" value="1"/>
</dbReference>
<dbReference type="STRING" id="3702.Q9LHN6"/>
<dbReference type="Araport" id="AT3G13624"/>
<dbReference type="TAIR" id="AT3G13624"/>
<dbReference type="InParanoid" id="Q9LHN6"/>
<dbReference type="PRO" id="PR:Q9LHN6"/>
<dbReference type="Proteomes" id="UP000006548">
    <property type="component" value="Chromosome 3"/>
</dbReference>
<dbReference type="ExpressionAtlas" id="Q9LHN6">
    <property type="expression patterns" value="baseline and differential"/>
</dbReference>
<dbReference type="CDD" id="cd22157">
    <property type="entry name" value="F-box_AtFBW1-like"/>
    <property type="match status" value="1"/>
</dbReference>
<dbReference type="Gene3D" id="1.20.1280.50">
    <property type="match status" value="1"/>
</dbReference>
<dbReference type="InterPro" id="IPR050233">
    <property type="entry name" value="A_thaliana_F-box"/>
</dbReference>
<dbReference type="InterPro" id="IPR006527">
    <property type="entry name" value="F-box-assoc_dom_typ1"/>
</dbReference>
<dbReference type="InterPro" id="IPR017451">
    <property type="entry name" value="F-box-assoc_interact_dom"/>
</dbReference>
<dbReference type="InterPro" id="IPR036047">
    <property type="entry name" value="F-box-like_dom_sf"/>
</dbReference>
<dbReference type="InterPro" id="IPR001810">
    <property type="entry name" value="F-box_dom"/>
</dbReference>
<dbReference type="NCBIfam" id="TIGR01640">
    <property type="entry name" value="F_box_assoc_1"/>
    <property type="match status" value="2"/>
</dbReference>
<dbReference type="PANTHER" id="PTHR47993:SF360">
    <property type="entry name" value="F-BOX ASSOCIATED DOMAIN-CONTAINING PROTEIN"/>
    <property type="match status" value="1"/>
</dbReference>
<dbReference type="PANTHER" id="PTHR47993">
    <property type="entry name" value="OS09G0372900 PROTEIN-RELATED"/>
    <property type="match status" value="1"/>
</dbReference>
<dbReference type="Pfam" id="PF00646">
    <property type="entry name" value="F-box"/>
    <property type="match status" value="1"/>
</dbReference>
<dbReference type="Pfam" id="PF07734">
    <property type="entry name" value="FBA_1"/>
    <property type="match status" value="1"/>
</dbReference>
<dbReference type="SMART" id="SM00256">
    <property type="entry name" value="FBOX"/>
    <property type="match status" value="1"/>
</dbReference>
<dbReference type="SUPFAM" id="SSF81383">
    <property type="entry name" value="F-box domain"/>
    <property type="match status" value="1"/>
</dbReference>
<dbReference type="PROSITE" id="PS50181">
    <property type="entry name" value="FBOX"/>
    <property type="match status" value="1"/>
</dbReference>
<feature type="chain" id="PRO_0000283411" description="Putative F-box protein At3g13624">
    <location>
        <begin position="1"/>
        <end position="366"/>
    </location>
</feature>
<feature type="domain" description="F-box" evidence="1">
    <location>
        <begin position="1"/>
        <end position="51"/>
    </location>
</feature>
<sequence length="366" mass="41738">MTTISDLPEDVVEEILPRVPLTSLSAVRSICKTWNTLSKNRVLCKAAVKKQFLGFIMMDYRVCSMKFHLRNDEGGDLVDDLSIKQVGILDQIEISEVLHCDGLLLFVTKDNSSLVVWNPYLGQTRLIQPSNNFHCSDRYAIGYDNNRNLKILRNFSDYGSSGSNKRGVSFKGNTYILAQGKIRVDSRWKIEAILLSFDFTTERFGPRLQLPFGFYYPQDLFSLSCVREEQLVVLHQSWMVSGELEIWITNKIDPGVVSWTKFLRSISCCRISIQAGSFFINEENQVAVVFDLDEYKGSETCRNQTAYIIGQDEYFKSVNIGEAPNLGRPEKYAPHIYCRPLVCSSYVPSLVPLQINQPDTRKESDD</sequence>
<protein>
    <recommendedName>
        <fullName>Putative F-box protein At3g13624</fullName>
    </recommendedName>
</protein>
<gene>
    <name type="ordered locus">At3g13624</name>
    <name type="ORF">K20M4.7</name>
</gene>
<keyword id="KW-1185">Reference proteome</keyword>
<reference key="1">
    <citation type="journal article" date="2000" name="DNA Res.">
        <title>Structural analysis of Arabidopsis thaliana chromosome 3. II. Sequence features of the 4,251,695 bp regions covered by 90 P1, TAC and BAC clones.</title>
        <authorList>
            <person name="Kaneko T."/>
            <person name="Katoh T."/>
            <person name="Sato S."/>
            <person name="Nakamura Y."/>
            <person name="Asamizu E."/>
            <person name="Tabata S."/>
        </authorList>
    </citation>
    <scope>NUCLEOTIDE SEQUENCE [LARGE SCALE GENOMIC DNA]</scope>
    <source>
        <strain>cv. Columbia</strain>
    </source>
</reference>
<reference key="2">
    <citation type="journal article" date="2017" name="Plant J.">
        <title>Araport11: a complete reannotation of the Arabidopsis thaliana reference genome.</title>
        <authorList>
            <person name="Cheng C.Y."/>
            <person name="Krishnakumar V."/>
            <person name="Chan A.P."/>
            <person name="Thibaud-Nissen F."/>
            <person name="Schobel S."/>
            <person name="Town C.D."/>
        </authorList>
    </citation>
    <scope>GENOME REANNOTATION</scope>
    <source>
        <strain>cv. Columbia</strain>
    </source>
</reference>